<protein>
    <recommendedName>
        <fullName evidence="1">5-methyltetrahydropteroyltriglutamate--homocysteine methyltransferase</fullName>
        <ecNumber evidence="1">2.1.1.14</ecNumber>
    </recommendedName>
    <alternativeName>
        <fullName evidence="1">Cobalamin-independent methionine synthase</fullName>
    </alternativeName>
    <alternativeName>
        <fullName evidence="1">Methionine synthase, vitamin-B12 independent isozyme</fullName>
    </alternativeName>
</protein>
<keyword id="KW-0028">Amino-acid biosynthesis</keyword>
<keyword id="KW-0479">Metal-binding</keyword>
<keyword id="KW-0486">Methionine biosynthesis</keyword>
<keyword id="KW-0489">Methyltransferase</keyword>
<keyword id="KW-0677">Repeat</keyword>
<keyword id="KW-0808">Transferase</keyword>
<keyword id="KW-0862">Zinc</keyword>
<accession>A4TR46</accession>
<name>METE_YERPP</name>
<sequence>MTILNHTLGFPRVGLKRELKKAQESYWAGNSTQEELLNVGRELRARHWQQQQQAGVDLVPVGDFAWYDHVLTTSLLLGNVPERHQNADGSIDIDTLFRIGRGRAPTGKPAAAAEMTKWFNTNYHYMVPEFQQGQQFKLGWTQLLDEVDEALALGHKIKPVLLGPITYLWLGKVKGEQFDRLSLLNDILPVYQQVLAELAKRGIEWVQIDEPALVLELPQEWLDAYQPAYQALQGQVKLLLTTYFDSIGHNIDTIRALPVQGLHVDVVAGHDDLAVLNKNLPKEWLLSLGVINGRNVWRADLSSWFERLQPLVNSRPLWLGSSCSLLHSPIDLNEETRLDAEVKSWFAFALQKCAELALLTQALNAPNDAKLAELAAYSAPIRARRSSSRVHNAQVEQRLAAITSQDIERQLPYEARAETQRKRFNLPAWPTTTIGSFPQTTEIRGLRLDFKQGRLDGKNYRTGISEHIKHAIAEQERLGLDVLVHGEAERNDMVEYFGEHLDGFVFTQNGWVQSYGSRCVKPPVIIGDISRPEAITVEWAKYAQSLTEKPVKGMLTGPVTILCWSFPREDVSRETIAKQIALALRDEVEDLEKAGIGIIQIDEPALREGLPLRRADWQAYLQWAVDAFKLNAAVAQNDTQIHTHMCYCEFNDIMDSIAALDADVITIETSRSDMELLESFEDFAYPNEIGPGVYDIHSPNVPSVEWIEALLRKAAQRIPAERLWVNPDCGLKTRGWPETRQALANMVLAAQRLREEQV</sequence>
<comment type="function">
    <text evidence="1">Catalyzes the transfer of a methyl group from 5-methyltetrahydrofolate to homocysteine resulting in methionine formation.</text>
</comment>
<comment type="catalytic activity">
    <reaction evidence="1">
        <text>5-methyltetrahydropteroyltri-L-glutamate + L-homocysteine = tetrahydropteroyltri-L-glutamate + L-methionine</text>
        <dbReference type="Rhea" id="RHEA:21196"/>
        <dbReference type="ChEBI" id="CHEBI:57844"/>
        <dbReference type="ChEBI" id="CHEBI:58140"/>
        <dbReference type="ChEBI" id="CHEBI:58199"/>
        <dbReference type="ChEBI" id="CHEBI:58207"/>
        <dbReference type="EC" id="2.1.1.14"/>
    </reaction>
</comment>
<comment type="cofactor">
    <cofactor evidence="1">
        <name>Zn(2+)</name>
        <dbReference type="ChEBI" id="CHEBI:29105"/>
    </cofactor>
    <text evidence="1">Binds 1 zinc ion per subunit.</text>
</comment>
<comment type="pathway">
    <text evidence="1">Amino-acid biosynthesis; L-methionine biosynthesis via de novo pathway; L-methionine from L-homocysteine (MetE route): step 1/1.</text>
</comment>
<comment type="similarity">
    <text evidence="1">Belongs to the vitamin-B12 independent methionine synthase family.</text>
</comment>
<reference key="1">
    <citation type="submission" date="2007-02" db="EMBL/GenBank/DDBJ databases">
        <title>Complete sequence of chromosome of Yersinia pestis Pestoides F.</title>
        <authorList>
            <consortium name="US DOE Joint Genome Institute"/>
            <person name="Copeland A."/>
            <person name="Lucas S."/>
            <person name="Lapidus A."/>
            <person name="Barry K."/>
            <person name="Detter J.C."/>
            <person name="Glavina del Rio T."/>
            <person name="Hammon N."/>
            <person name="Israni S."/>
            <person name="Dalin E."/>
            <person name="Tice H."/>
            <person name="Pitluck S."/>
            <person name="Di Bartolo G."/>
            <person name="Chain P."/>
            <person name="Malfatti S."/>
            <person name="Shin M."/>
            <person name="Vergez L."/>
            <person name="Schmutz J."/>
            <person name="Larimer F."/>
            <person name="Land M."/>
            <person name="Hauser L."/>
            <person name="Worsham P."/>
            <person name="Chu M."/>
            <person name="Bearden S."/>
            <person name="Garcia E."/>
            <person name="Richardson P."/>
        </authorList>
    </citation>
    <scope>NUCLEOTIDE SEQUENCE [LARGE SCALE GENOMIC DNA]</scope>
    <source>
        <strain>Pestoides F</strain>
    </source>
</reference>
<organism>
    <name type="scientific">Yersinia pestis (strain Pestoides F)</name>
    <dbReference type="NCBI Taxonomy" id="386656"/>
    <lineage>
        <taxon>Bacteria</taxon>
        <taxon>Pseudomonadati</taxon>
        <taxon>Pseudomonadota</taxon>
        <taxon>Gammaproteobacteria</taxon>
        <taxon>Enterobacterales</taxon>
        <taxon>Yersiniaceae</taxon>
        <taxon>Yersinia</taxon>
    </lineage>
</organism>
<proteinExistence type="inferred from homology"/>
<evidence type="ECO:0000255" key="1">
    <source>
        <dbReference type="HAMAP-Rule" id="MF_00172"/>
    </source>
</evidence>
<gene>
    <name evidence="1" type="primary">metE</name>
    <name type="ordered locus">YPDSF_3405</name>
</gene>
<dbReference type="EC" id="2.1.1.14" evidence="1"/>
<dbReference type="EMBL" id="CP000668">
    <property type="protein sequence ID" value="ABP41758.1"/>
    <property type="molecule type" value="Genomic_DNA"/>
</dbReference>
<dbReference type="RefSeq" id="WP_011906444.1">
    <property type="nucleotide sequence ID" value="NZ_CP009715.1"/>
</dbReference>
<dbReference type="SMR" id="A4TR46"/>
<dbReference type="KEGG" id="ypp:YPDSF_3405"/>
<dbReference type="PATRIC" id="fig|386656.14.peg.923"/>
<dbReference type="UniPathway" id="UPA00051">
    <property type="reaction ID" value="UER00082"/>
</dbReference>
<dbReference type="GO" id="GO:0003871">
    <property type="term" value="F:5-methyltetrahydropteroyltriglutamate-homocysteine S-methyltransferase activity"/>
    <property type="evidence" value="ECO:0007669"/>
    <property type="project" value="UniProtKB-UniRule"/>
</dbReference>
<dbReference type="GO" id="GO:0008270">
    <property type="term" value="F:zinc ion binding"/>
    <property type="evidence" value="ECO:0007669"/>
    <property type="project" value="InterPro"/>
</dbReference>
<dbReference type="GO" id="GO:0009086">
    <property type="term" value="P:methionine biosynthetic process"/>
    <property type="evidence" value="ECO:0007669"/>
    <property type="project" value="UniProtKB-UniRule"/>
</dbReference>
<dbReference type="GO" id="GO:0032259">
    <property type="term" value="P:methylation"/>
    <property type="evidence" value="ECO:0007669"/>
    <property type="project" value="UniProtKB-KW"/>
</dbReference>
<dbReference type="CDD" id="cd03311">
    <property type="entry name" value="CIMS_C_terminal_like"/>
    <property type="match status" value="1"/>
</dbReference>
<dbReference type="CDD" id="cd03312">
    <property type="entry name" value="CIMS_N_terminal_like"/>
    <property type="match status" value="1"/>
</dbReference>
<dbReference type="FunFam" id="3.20.20.210:FF:000002">
    <property type="entry name" value="5-methyltetrahydropteroyltriglutamate--homocysteine methyltransferase"/>
    <property type="match status" value="1"/>
</dbReference>
<dbReference type="FunFam" id="3.20.20.210:FF:000003">
    <property type="entry name" value="5-methyltetrahydropteroyltriglutamate--homocysteine methyltransferase"/>
    <property type="match status" value="1"/>
</dbReference>
<dbReference type="Gene3D" id="3.20.20.210">
    <property type="match status" value="2"/>
</dbReference>
<dbReference type="HAMAP" id="MF_00172">
    <property type="entry name" value="Meth_synth"/>
    <property type="match status" value="1"/>
</dbReference>
<dbReference type="InterPro" id="IPR013215">
    <property type="entry name" value="Cbl-indep_Met_Synth_N"/>
</dbReference>
<dbReference type="InterPro" id="IPR006276">
    <property type="entry name" value="Cobalamin-indep_Met_synthase"/>
</dbReference>
<dbReference type="InterPro" id="IPR002629">
    <property type="entry name" value="Met_Synth_C/arc"/>
</dbReference>
<dbReference type="InterPro" id="IPR038071">
    <property type="entry name" value="UROD/MetE-like_sf"/>
</dbReference>
<dbReference type="NCBIfam" id="TIGR01371">
    <property type="entry name" value="met_syn_B12ind"/>
    <property type="match status" value="1"/>
</dbReference>
<dbReference type="NCBIfam" id="NF003556">
    <property type="entry name" value="PRK05222.1"/>
    <property type="match status" value="1"/>
</dbReference>
<dbReference type="PANTHER" id="PTHR30519">
    <property type="entry name" value="5-METHYLTETRAHYDROPTEROYLTRIGLUTAMATE--HOMOCYSTEINE METHYLTRANSFERASE"/>
    <property type="match status" value="1"/>
</dbReference>
<dbReference type="Pfam" id="PF08267">
    <property type="entry name" value="Meth_synt_1"/>
    <property type="match status" value="1"/>
</dbReference>
<dbReference type="Pfam" id="PF01717">
    <property type="entry name" value="Meth_synt_2"/>
    <property type="match status" value="1"/>
</dbReference>
<dbReference type="PIRSF" id="PIRSF000382">
    <property type="entry name" value="MeTrfase_B12_ind"/>
    <property type="match status" value="1"/>
</dbReference>
<dbReference type="SUPFAM" id="SSF51726">
    <property type="entry name" value="UROD/MetE-like"/>
    <property type="match status" value="2"/>
</dbReference>
<feature type="chain" id="PRO_1000017296" description="5-methyltetrahydropteroyltriglutamate--homocysteine methyltransferase">
    <location>
        <begin position="1"/>
        <end position="758"/>
    </location>
</feature>
<feature type="active site" description="Proton donor" evidence="1">
    <location>
        <position position="697"/>
    </location>
</feature>
<feature type="binding site" evidence="1">
    <location>
        <begin position="17"/>
        <end position="20"/>
    </location>
    <ligand>
        <name>5-methyltetrahydropteroyltri-L-glutamate</name>
        <dbReference type="ChEBI" id="CHEBI:58207"/>
    </ligand>
</feature>
<feature type="binding site" evidence="1">
    <location>
        <position position="117"/>
    </location>
    <ligand>
        <name>5-methyltetrahydropteroyltri-L-glutamate</name>
        <dbReference type="ChEBI" id="CHEBI:58207"/>
    </ligand>
</feature>
<feature type="binding site" evidence="1">
    <location>
        <begin position="434"/>
        <end position="436"/>
    </location>
    <ligand>
        <name>L-homocysteine</name>
        <dbReference type="ChEBI" id="CHEBI:58199"/>
    </ligand>
</feature>
<feature type="binding site" evidence="1">
    <location>
        <begin position="434"/>
        <end position="436"/>
    </location>
    <ligand>
        <name>L-methionine</name>
        <dbReference type="ChEBI" id="CHEBI:57844"/>
    </ligand>
</feature>
<feature type="binding site" evidence="1">
    <location>
        <position position="487"/>
    </location>
    <ligand>
        <name>L-homocysteine</name>
        <dbReference type="ChEBI" id="CHEBI:58199"/>
    </ligand>
</feature>
<feature type="binding site" evidence="1">
    <location>
        <position position="487"/>
    </location>
    <ligand>
        <name>L-methionine</name>
        <dbReference type="ChEBI" id="CHEBI:57844"/>
    </ligand>
</feature>
<feature type="binding site" evidence="1">
    <location>
        <begin position="518"/>
        <end position="519"/>
    </location>
    <ligand>
        <name>5-methyltetrahydropteroyltri-L-glutamate</name>
        <dbReference type="ChEBI" id="CHEBI:58207"/>
    </ligand>
</feature>
<feature type="binding site" evidence="1">
    <location>
        <position position="564"/>
    </location>
    <ligand>
        <name>5-methyltetrahydropteroyltri-L-glutamate</name>
        <dbReference type="ChEBI" id="CHEBI:58207"/>
    </ligand>
</feature>
<feature type="binding site" evidence="1">
    <location>
        <position position="602"/>
    </location>
    <ligand>
        <name>L-homocysteine</name>
        <dbReference type="ChEBI" id="CHEBI:58199"/>
    </ligand>
</feature>
<feature type="binding site" evidence="1">
    <location>
        <position position="602"/>
    </location>
    <ligand>
        <name>L-methionine</name>
        <dbReference type="ChEBI" id="CHEBI:57844"/>
    </ligand>
</feature>
<feature type="binding site" evidence="1">
    <location>
        <position position="608"/>
    </location>
    <ligand>
        <name>5-methyltetrahydropteroyltri-L-glutamate</name>
        <dbReference type="ChEBI" id="CHEBI:58207"/>
    </ligand>
</feature>
<feature type="binding site" evidence="1">
    <location>
        <position position="644"/>
    </location>
    <ligand>
        <name>Zn(2+)</name>
        <dbReference type="ChEBI" id="CHEBI:29105"/>
        <note>catalytic</note>
    </ligand>
</feature>
<feature type="binding site" evidence="1">
    <location>
        <position position="646"/>
    </location>
    <ligand>
        <name>Zn(2+)</name>
        <dbReference type="ChEBI" id="CHEBI:29105"/>
        <note>catalytic</note>
    </ligand>
</feature>
<feature type="binding site" evidence="1">
    <location>
        <position position="668"/>
    </location>
    <ligand>
        <name>Zn(2+)</name>
        <dbReference type="ChEBI" id="CHEBI:29105"/>
        <note>catalytic</note>
    </ligand>
</feature>
<feature type="binding site" evidence="1">
    <location>
        <position position="729"/>
    </location>
    <ligand>
        <name>Zn(2+)</name>
        <dbReference type="ChEBI" id="CHEBI:29105"/>
        <note>catalytic</note>
    </ligand>
</feature>